<evidence type="ECO:0000250" key="1">
    <source>
        <dbReference type="UniProtKB" id="P40836"/>
    </source>
</evidence>
<evidence type="ECO:0000255" key="2"/>
<evidence type="ECO:0000269" key="3">
    <source>
    </source>
</evidence>
<evidence type="ECO:0000269" key="4">
    <source>
    </source>
</evidence>
<evidence type="ECO:0000269" key="5">
    <source>
    </source>
</evidence>
<evidence type="ECO:0000269" key="6">
    <source ref="1"/>
</evidence>
<evidence type="ECO:0000303" key="7">
    <source>
    </source>
</evidence>
<evidence type="ECO:0000303" key="8">
    <source>
    </source>
</evidence>
<evidence type="ECO:0000303" key="9">
    <source>
    </source>
</evidence>
<evidence type="ECO:0000303" key="10">
    <source ref="1"/>
</evidence>
<evidence type="ECO:0000305" key="11"/>
<evidence type="ECO:0000305" key="12">
    <source ref="1"/>
</evidence>
<feature type="peptide" id="PRO_0000351554" description="Brevinin-1Ra" evidence="3 4 5 6">
    <location>
        <begin position="1"/>
        <end position="24"/>
    </location>
</feature>
<feature type="disulfide bond" evidence="3 4 5">
    <location>
        <begin position="18"/>
        <end position="24"/>
    </location>
</feature>
<keyword id="KW-0878">Amphibian defense peptide</keyword>
<keyword id="KW-0044">Antibiotic</keyword>
<keyword id="KW-0929">Antimicrobial</keyword>
<keyword id="KW-0903">Direct protein sequencing</keyword>
<keyword id="KW-1015">Disulfide bond</keyword>
<keyword id="KW-0964">Secreted</keyword>
<accession>P86028</accession>
<comment type="function">
    <text evidence="1">Antimicrobial peptide.</text>
</comment>
<comment type="subcellular location">
    <subcellularLocation>
        <location evidence="3 4 5">Secreted</location>
    </subcellularLocation>
</comment>
<comment type="tissue specificity">
    <text evidence="12">Expressed by the skin glands.</text>
</comment>
<comment type="mass spectrometry"/>
<comment type="mass spectrometry"/>
<comment type="mass spectrometry"/>
<comment type="mass spectrometry"/>
<comment type="similarity">
    <text evidence="2">Belongs to the frog skin active peptide (FSAP) family. Brevinin subfamily.</text>
</comment>
<sequence>VIPFVASVAAEMMQHVYCAASRRC</sequence>
<organism>
    <name type="scientific">Pelophylax ridibundus</name>
    <name type="common">Marsh frog</name>
    <name type="synonym">Rana ridibunda</name>
    <dbReference type="NCBI Taxonomy" id="8406"/>
    <lineage>
        <taxon>Eukaryota</taxon>
        <taxon>Metazoa</taxon>
        <taxon>Chordata</taxon>
        <taxon>Craniata</taxon>
        <taxon>Vertebrata</taxon>
        <taxon>Euteleostomi</taxon>
        <taxon>Amphibia</taxon>
        <taxon>Batrachia</taxon>
        <taxon>Anura</taxon>
        <taxon>Neobatrachia</taxon>
        <taxon>Ranoidea</taxon>
        <taxon>Ranidae</taxon>
        <taxon>Pelophylax</taxon>
    </lineage>
</organism>
<name>BR1A_PELRI</name>
<reference evidence="11" key="1">
    <citation type="journal article" date="2007" name="Mass Spectrom.">
        <title>Host-defence peptides from the skin secretion of the European marsh frog Rana ridibunda.</title>
        <authorList>
            <person name="Artemenko K.A."/>
            <person name="Samgina T.Y."/>
            <person name="Lebedev A.T."/>
            <person name="Doyle J.R."/>
            <person name="Llewellyn L.E."/>
            <person name="Bilusich D."/>
            <person name="Bowie J.H."/>
        </authorList>
    </citation>
    <scope>PROTEIN SEQUENCE</scope>
    <scope>MASS SPECTROMETRY</scope>
    <source>
        <tissue evidence="6">Skin secretion</tissue>
    </source>
</reference>
<reference evidence="11" key="2">
    <citation type="journal article" date="2008" name="J. Am. Soc. Mass Spectrom.">
        <title>Oxidation versus carboxamidomethylation of S-S bond in ranid frog peptides: pro and contra for de novo MALDI-MS sequencing.</title>
        <authorList>
            <person name="Samgina T.Y."/>
            <person name="Artemenko K.A."/>
            <person name="Gorshkov V.A."/>
            <person name="Poljakov N.B."/>
            <person name="Lebedev A.T."/>
        </authorList>
    </citation>
    <scope>PROTEIN SEQUENCE</scope>
    <scope>SUBCELLULAR LOCATION</scope>
    <scope>TISSUE SPECIFICITY</scope>
    <scope>MASS SPECTROMETRY</scope>
    <scope>DISULFIDE BOND</scope>
    <source>
        <tissue evidence="7">Skin secretion</tissue>
    </source>
</reference>
<reference evidence="11" key="3">
    <citation type="journal article" date="2008" name="Rapid Commun. Mass Spectrom.">
        <title>De novo sequencing of peptides secreted by the skin glands of the caucasian green frog Rana ridibunda.</title>
        <authorList>
            <person name="Samgina T.Y."/>
            <person name="Artemenko K.A."/>
            <person name="Gorshkov V.A."/>
            <person name="Ogourtsov S.V."/>
            <person name="Zubarev R.A."/>
            <person name="Lebedev A.T."/>
        </authorList>
    </citation>
    <scope>PROTEIN SEQUENCE</scope>
    <scope>SUBCELLULAR LOCATION</scope>
    <scope>TISSUE SPECIFICITY</scope>
    <scope>MASS SPECTROMETRY</scope>
    <scope>DISULFIDE BOND</scope>
    <source>
        <tissue evidence="8">Skin secretion</tissue>
    </source>
</reference>
<reference key="4">
    <citation type="journal article" date="2017" name="Anal. Bioanal. Chem.">
        <title>Differentiation of frogs from two populations belonging to the Pelophylax esculentus complex by LC-MS/MS comparison of their skin peptidomes.</title>
        <authorList>
            <person name="Samgina T.Y."/>
            <person name="Artemenko K.A."/>
            <person name="Bergquist J."/>
            <person name="Trebse P."/>
            <person name="Torkar G."/>
            <person name="Tolpina M.D."/>
            <person name="Lebedev A.T."/>
        </authorList>
    </citation>
    <scope>PROTEIN SEQUENCE</scope>
    <scope>SUBCELLULAR LOCATION</scope>
    <scope>DISULFIDE BOND</scope>
    <scope>MASS SPECTROMETRY</scope>
    <scope>IDENTIFICATION BY MASS SPECTROMETRY</scope>
    <source>
        <tissue evidence="9">Skin secretion</tissue>
    </source>
</reference>
<dbReference type="GO" id="GO:0005576">
    <property type="term" value="C:extracellular region"/>
    <property type="evidence" value="ECO:0007669"/>
    <property type="project" value="UniProtKB-SubCell"/>
</dbReference>
<dbReference type="GO" id="GO:0042742">
    <property type="term" value="P:defense response to bacterium"/>
    <property type="evidence" value="ECO:0007669"/>
    <property type="project" value="UniProtKB-KW"/>
</dbReference>
<dbReference type="InterPro" id="IPR012520">
    <property type="entry name" value="Antimicrobial_frog_1"/>
</dbReference>
<dbReference type="Pfam" id="PF08018">
    <property type="entry name" value="Antimicrobial_1"/>
    <property type="match status" value="1"/>
</dbReference>
<proteinExistence type="evidence at protein level"/>
<protein>
    <recommendedName>
        <fullName evidence="10">Brevinin-1Ra</fullName>
    </recommendedName>
</protein>